<protein>
    <recommendedName>
        <fullName>NADH-ubiquinone oxidoreductase chain 6</fullName>
        <ecNumber>7.1.1.2</ecNumber>
    </recommendedName>
    <alternativeName>
        <fullName>NADH dehydrogenase subunit 6</fullName>
    </alternativeName>
</protein>
<organism>
    <name type="scientific">Latimeria chalumnae</name>
    <name type="common">Coelacanth</name>
    <dbReference type="NCBI Taxonomy" id="7897"/>
    <lineage>
        <taxon>Eukaryota</taxon>
        <taxon>Metazoa</taxon>
        <taxon>Chordata</taxon>
        <taxon>Craniata</taxon>
        <taxon>Vertebrata</taxon>
        <taxon>Euteleostomi</taxon>
        <taxon>Coelacanthiformes</taxon>
        <taxon>Coelacanthidae</taxon>
        <taxon>Latimeria</taxon>
    </lineage>
</organism>
<keyword id="KW-0249">Electron transport</keyword>
<keyword id="KW-0472">Membrane</keyword>
<keyword id="KW-0496">Mitochondrion</keyword>
<keyword id="KW-0520">NAD</keyword>
<keyword id="KW-1185">Reference proteome</keyword>
<keyword id="KW-0679">Respiratory chain</keyword>
<keyword id="KW-1278">Translocase</keyword>
<keyword id="KW-0812">Transmembrane</keyword>
<keyword id="KW-1133">Transmembrane helix</keyword>
<keyword id="KW-0813">Transport</keyword>
<keyword id="KW-0830">Ubiquinone</keyword>
<proteinExistence type="inferred from homology"/>
<dbReference type="EC" id="7.1.1.2"/>
<dbReference type="EMBL" id="U82228">
    <property type="protein sequence ID" value="AAC60329.1"/>
    <property type="molecule type" value="Genomic_DNA"/>
</dbReference>
<dbReference type="PIR" id="D58893">
    <property type="entry name" value="D58893"/>
</dbReference>
<dbReference type="RefSeq" id="NP_008340.1">
    <property type="nucleotide sequence ID" value="NC_001804.1"/>
</dbReference>
<dbReference type="SMR" id="O03175"/>
<dbReference type="FunCoup" id="O03175">
    <property type="interactions" value="253"/>
</dbReference>
<dbReference type="STRING" id="7897.ENSLACP00000021816"/>
<dbReference type="Ensembl" id="ENSLACT00000024872.1">
    <property type="protein sequence ID" value="ENSLACP00000021816.1"/>
    <property type="gene ID" value="ENSLACG00000022088.1"/>
</dbReference>
<dbReference type="GeneID" id="808094"/>
<dbReference type="KEGG" id="lcm:808094"/>
<dbReference type="CTD" id="4541"/>
<dbReference type="eggNOG" id="ENOG502S2Q2">
    <property type="taxonomic scope" value="Eukaryota"/>
</dbReference>
<dbReference type="GeneTree" id="ENSGT00390000003988"/>
<dbReference type="HOGENOM" id="CLU_129718_0_0_1"/>
<dbReference type="InParanoid" id="O03175"/>
<dbReference type="OMA" id="WVIYDTG"/>
<dbReference type="OrthoDB" id="9837654at2759"/>
<dbReference type="TreeFam" id="TF343324"/>
<dbReference type="Proteomes" id="UP000008672">
    <property type="component" value="Mitochondrion"/>
</dbReference>
<dbReference type="Bgee" id="ENSLACG00000022088">
    <property type="expression patterns" value="Expressed in mesonephros and 6 other cell types or tissues"/>
</dbReference>
<dbReference type="GO" id="GO:0031966">
    <property type="term" value="C:mitochondrial membrane"/>
    <property type="evidence" value="ECO:0007669"/>
    <property type="project" value="UniProtKB-SubCell"/>
</dbReference>
<dbReference type="GO" id="GO:0008137">
    <property type="term" value="F:NADH dehydrogenase (ubiquinone) activity"/>
    <property type="evidence" value="ECO:0007669"/>
    <property type="project" value="UniProtKB-EC"/>
</dbReference>
<dbReference type="Gene3D" id="1.20.120.1200">
    <property type="entry name" value="NADH-ubiquinone/plastoquinone oxidoreductase chain 6, subunit NuoJ"/>
    <property type="match status" value="1"/>
</dbReference>
<dbReference type="InterPro" id="IPR050269">
    <property type="entry name" value="ComplexI_Subunit6"/>
</dbReference>
<dbReference type="InterPro" id="IPR001457">
    <property type="entry name" value="NADH_UbQ/plastoQ_OxRdtase_su6"/>
</dbReference>
<dbReference type="InterPro" id="IPR042106">
    <property type="entry name" value="Nuo/plastoQ_OxRdtase_6_NuoJ"/>
</dbReference>
<dbReference type="PANTHER" id="PTHR11435">
    <property type="entry name" value="NADH UBIQUINONE OXIDOREDUCTASE SUBUNIT ND6"/>
    <property type="match status" value="1"/>
</dbReference>
<dbReference type="PANTHER" id="PTHR11435:SF1">
    <property type="entry name" value="NADH-UBIQUINONE OXIDOREDUCTASE CHAIN 6"/>
    <property type="match status" value="1"/>
</dbReference>
<dbReference type="Pfam" id="PF00499">
    <property type="entry name" value="Oxidored_q3"/>
    <property type="match status" value="1"/>
</dbReference>
<evidence type="ECO:0000250" key="1"/>
<evidence type="ECO:0000255" key="2"/>
<evidence type="ECO:0000305" key="3"/>
<sequence length="173" mass="18866">MIYFVFVVLMGLVVGLMAVASNPAPYFAALGLVFSAVVGCGFLVGYGGSFLSLVLFLIYLGGMLVVFAYSAALAAEPYPESWGSWSVFLYILVYLFGFLLVGYYCYGWWYDFYWMSLDVFGEMSVLSGDVSGVPMVYSSGGFLLLVTGWVLLLALFVVLEITRGLSRGALRAV</sequence>
<name>NU6M_LATCH</name>
<reference key="1">
    <citation type="journal article" date="1997" name="Genetics">
        <title>The complete DNA sequence of the mitochondrial genome of a 'living fossil,' the coelacanth (Latimeria chalumnae).</title>
        <authorList>
            <person name="Zardoya R."/>
            <person name="Meyer A."/>
        </authorList>
    </citation>
    <scope>NUCLEOTIDE SEQUENCE [LARGE SCALE GENOMIC DNA]</scope>
</reference>
<feature type="chain" id="PRO_0000118294" description="NADH-ubiquinone oxidoreductase chain 6">
    <location>
        <begin position="1"/>
        <end position="173"/>
    </location>
</feature>
<feature type="transmembrane region" description="Helical" evidence="2">
    <location>
        <begin position="1"/>
        <end position="21"/>
    </location>
</feature>
<feature type="transmembrane region" description="Helical" evidence="2">
    <location>
        <begin position="27"/>
        <end position="47"/>
    </location>
</feature>
<feature type="transmembrane region" description="Helical" evidence="2">
    <location>
        <begin position="53"/>
        <end position="73"/>
    </location>
</feature>
<feature type="transmembrane region" description="Helical" evidence="2">
    <location>
        <begin position="82"/>
        <end position="102"/>
    </location>
</feature>
<feature type="transmembrane region" description="Helical" evidence="2">
    <location>
        <begin position="106"/>
        <end position="126"/>
    </location>
</feature>
<feature type="transmembrane region" description="Helical" evidence="2">
    <location>
        <begin position="141"/>
        <end position="161"/>
    </location>
</feature>
<comment type="function">
    <text evidence="1">Core subunit of the mitochondrial membrane respiratory chain NADH dehydrogenase (Complex I) that is believed to belong to the minimal assembly required for catalysis. Complex I functions in the transfer of electrons from NADH to the respiratory chain. The immediate electron acceptor for the enzyme is believed to be ubiquinone (By similarity).</text>
</comment>
<comment type="catalytic activity">
    <reaction>
        <text>a ubiquinone + NADH + 5 H(+)(in) = a ubiquinol + NAD(+) + 4 H(+)(out)</text>
        <dbReference type="Rhea" id="RHEA:29091"/>
        <dbReference type="Rhea" id="RHEA-COMP:9565"/>
        <dbReference type="Rhea" id="RHEA-COMP:9566"/>
        <dbReference type="ChEBI" id="CHEBI:15378"/>
        <dbReference type="ChEBI" id="CHEBI:16389"/>
        <dbReference type="ChEBI" id="CHEBI:17976"/>
        <dbReference type="ChEBI" id="CHEBI:57540"/>
        <dbReference type="ChEBI" id="CHEBI:57945"/>
        <dbReference type="EC" id="7.1.1.2"/>
    </reaction>
</comment>
<comment type="subcellular location">
    <subcellularLocation>
        <location evidence="3">Mitochondrion membrane</location>
        <topology evidence="3">Multi-pass membrane protein</topology>
    </subcellularLocation>
</comment>
<comment type="similarity">
    <text evidence="3">Belongs to the complex I subunit 6 family.</text>
</comment>
<geneLocation type="mitochondrion"/>
<gene>
    <name type="primary">MT-ND6</name>
    <name type="synonym">MTND6</name>
    <name type="synonym">NADH6</name>
    <name type="synonym">ND6</name>
</gene>
<accession>O03175</accession>